<organism>
    <name type="scientific">Pseudomonas aeruginosa (strain ATCC 15692 / DSM 22644 / CIP 104116 / JCM 14847 / LMG 12228 / 1C / PRS 101 / PAO1)</name>
    <dbReference type="NCBI Taxonomy" id="208964"/>
    <lineage>
        <taxon>Bacteria</taxon>
        <taxon>Pseudomonadati</taxon>
        <taxon>Pseudomonadota</taxon>
        <taxon>Gammaproteobacteria</taxon>
        <taxon>Pseudomonadales</taxon>
        <taxon>Pseudomonadaceae</taxon>
        <taxon>Pseudomonas</taxon>
    </lineage>
</organism>
<sequence>MARILIVDDSPTEMYKLTAMLEKHGHQVLKAENGGDGVALARQEKPDVVLMDIVMPGLNGFQATRQLTKDAETSAIPVIIVTTKDQETDKVWGKRQGARDYLTKPVDEETLLKTINAVLAG</sequence>
<feature type="chain" id="PRO_0000081204" description="Protein PilH">
    <location>
        <begin position="1"/>
        <end position="121"/>
    </location>
</feature>
<feature type="domain" description="Response regulatory" evidence="1">
    <location>
        <begin position="3"/>
        <end position="119"/>
    </location>
</feature>
<feature type="modified residue" description="4-aspartylphosphate" evidence="1">
    <location>
        <position position="52"/>
    </location>
</feature>
<comment type="function">
    <text>May be a part of a signal-transduction system that regulates twitching motility by controlling pilus function (extension and retraction).</text>
</comment>
<dbReference type="EMBL" id="L22036">
    <property type="protein sequence ID" value="AAA25950.1"/>
    <property type="molecule type" value="Genomic_DNA"/>
</dbReference>
<dbReference type="EMBL" id="AE004091">
    <property type="protein sequence ID" value="AAG03798.1"/>
    <property type="molecule type" value="Genomic_DNA"/>
</dbReference>
<dbReference type="PIR" id="S40035">
    <property type="entry name" value="S40035"/>
</dbReference>
<dbReference type="RefSeq" id="NP_249100.1">
    <property type="nucleotide sequence ID" value="NC_002516.2"/>
</dbReference>
<dbReference type="RefSeq" id="WP_003084587.1">
    <property type="nucleotide sequence ID" value="NZ_QZGE01000016.1"/>
</dbReference>
<dbReference type="SMR" id="P43501"/>
<dbReference type="STRING" id="208964.PA0409"/>
<dbReference type="PaxDb" id="208964-PA0409"/>
<dbReference type="GeneID" id="77218936"/>
<dbReference type="GeneID" id="878198"/>
<dbReference type="KEGG" id="pae:PA0409"/>
<dbReference type="PATRIC" id="fig|208964.12.peg.430"/>
<dbReference type="PseudoCAP" id="PA0409"/>
<dbReference type="HOGENOM" id="CLU_000445_69_17_6"/>
<dbReference type="InParanoid" id="P43501"/>
<dbReference type="OrthoDB" id="9800897at2"/>
<dbReference type="PhylomeDB" id="P43501"/>
<dbReference type="BioCyc" id="PAER208964:G1FZ6-413-MONOMER"/>
<dbReference type="Proteomes" id="UP000002438">
    <property type="component" value="Chromosome"/>
</dbReference>
<dbReference type="GO" id="GO:0000160">
    <property type="term" value="P:phosphorelay signal transduction system"/>
    <property type="evidence" value="ECO:0007669"/>
    <property type="project" value="UniProtKB-KW"/>
</dbReference>
<dbReference type="Gene3D" id="3.40.50.2300">
    <property type="match status" value="1"/>
</dbReference>
<dbReference type="InterPro" id="IPR050595">
    <property type="entry name" value="Bact_response_regulator"/>
</dbReference>
<dbReference type="InterPro" id="IPR011006">
    <property type="entry name" value="CheY-like_superfamily"/>
</dbReference>
<dbReference type="InterPro" id="IPR001789">
    <property type="entry name" value="Sig_transdc_resp-reg_receiver"/>
</dbReference>
<dbReference type="PANTHER" id="PTHR44591:SF20">
    <property type="entry name" value="PROTEIN PILH"/>
    <property type="match status" value="1"/>
</dbReference>
<dbReference type="PANTHER" id="PTHR44591">
    <property type="entry name" value="STRESS RESPONSE REGULATOR PROTEIN 1"/>
    <property type="match status" value="1"/>
</dbReference>
<dbReference type="Pfam" id="PF00072">
    <property type="entry name" value="Response_reg"/>
    <property type="match status" value="1"/>
</dbReference>
<dbReference type="SMART" id="SM00448">
    <property type="entry name" value="REC"/>
    <property type="match status" value="1"/>
</dbReference>
<dbReference type="SUPFAM" id="SSF52172">
    <property type="entry name" value="CheY-like"/>
    <property type="match status" value="1"/>
</dbReference>
<dbReference type="PROSITE" id="PS50110">
    <property type="entry name" value="RESPONSE_REGULATORY"/>
    <property type="match status" value="1"/>
</dbReference>
<accession>P43501</accession>
<reference key="1">
    <citation type="journal article" date="1994" name="Mol. Microbiol.">
        <title>Characterization of a Pseudomonas aeruginosa gene cluster involved in pilus biosynthesis and twitching motility: sequence similarity to the chemotaxis proteins of enterics and the gliding bacterium Myxococcus xanthus.</title>
        <authorList>
            <person name="Darzins A."/>
        </authorList>
    </citation>
    <scope>NUCLEOTIDE SEQUENCE [GENOMIC DNA]</scope>
    <source>
        <strain>ATCC 15692 / DSM 22644 / CIP 104116 / JCM 14847 / LMG 12228 / 1C / PRS 101 / PAO1</strain>
    </source>
</reference>
<reference key="2">
    <citation type="journal article" date="2000" name="Nature">
        <title>Complete genome sequence of Pseudomonas aeruginosa PAO1, an opportunistic pathogen.</title>
        <authorList>
            <person name="Stover C.K."/>
            <person name="Pham X.-Q.T."/>
            <person name="Erwin A.L."/>
            <person name="Mizoguchi S.D."/>
            <person name="Warrener P."/>
            <person name="Hickey M.J."/>
            <person name="Brinkman F.S.L."/>
            <person name="Hufnagle W.O."/>
            <person name="Kowalik D.J."/>
            <person name="Lagrou M."/>
            <person name="Garber R.L."/>
            <person name="Goltry L."/>
            <person name="Tolentino E."/>
            <person name="Westbrock-Wadman S."/>
            <person name="Yuan Y."/>
            <person name="Brody L.L."/>
            <person name="Coulter S.N."/>
            <person name="Folger K.R."/>
            <person name="Kas A."/>
            <person name="Larbig K."/>
            <person name="Lim R.M."/>
            <person name="Smith K.A."/>
            <person name="Spencer D.H."/>
            <person name="Wong G.K.-S."/>
            <person name="Wu Z."/>
            <person name="Paulsen I.T."/>
            <person name="Reizer J."/>
            <person name="Saier M.H. Jr."/>
            <person name="Hancock R.E.W."/>
            <person name="Lory S."/>
            <person name="Olson M.V."/>
        </authorList>
    </citation>
    <scope>NUCLEOTIDE SEQUENCE [LARGE SCALE GENOMIC DNA]</scope>
    <source>
        <strain>ATCC 15692 / DSM 22644 / CIP 104116 / JCM 14847 / LMG 12228 / 1C / PRS 101 / PAO1</strain>
    </source>
</reference>
<evidence type="ECO:0000255" key="1">
    <source>
        <dbReference type="PROSITE-ProRule" id="PRU00169"/>
    </source>
</evidence>
<keyword id="KW-0597">Phosphoprotein</keyword>
<keyword id="KW-1185">Reference proteome</keyword>
<keyword id="KW-0902">Two-component regulatory system</keyword>
<protein>
    <recommendedName>
        <fullName>Protein PilH</fullName>
    </recommendedName>
</protein>
<proteinExistence type="inferred from homology"/>
<name>PILH_PSEAE</name>
<gene>
    <name type="primary">pilH</name>
    <name type="ordered locus">PA0409</name>
</gene>